<comment type="function">
    <text evidence="1">Catalyzes a trans-dehydration via an enolate intermediate.</text>
</comment>
<comment type="catalytic activity">
    <reaction>
        <text>3-dehydroquinate = 3-dehydroshikimate + H2O</text>
        <dbReference type="Rhea" id="RHEA:21096"/>
        <dbReference type="ChEBI" id="CHEBI:15377"/>
        <dbReference type="ChEBI" id="CHEBI:16630"/>
        <dbReference type="ChEBI" id="CHEBI:32364"/>
        <dbReference type="EC" id="4.2.1.10"/>
    </reaction>
</comment>
<comment type="pathway">
    <text>Metabolic intermediate biosynthesis; chorismate biosynthesis; chorismate from D-erythrose 4-phosphate and phosphoenolpyruvate: step 3/7.</text>
</comment>
<comment type="subunit">
    <text evidence="1">Homododecamer.</text>
</comment>
<comment type="similarity">
    <text evidence="2">Belongs to the type-II 3-dehydroquinase family.</text>
</comment>
<dbReference type="EC" id="4.2.1.10"/>
<dbReference type="EMBL" id="AL583918">
    <property type="protein sequence ID" value="CAC30027.1"/>
    <property type="molecule type" value="Genomic_DNA"/>
</dbReference>
<dbReference type="PIR" id="G86973">
    <property type="entry name" value="G86973"/>
</dbReference>
<dbReference type="RefSeq" id="NP_301444.1">
    <property type="nucleotide sequence ID" value="NC_002677.1"/>
</dbReference>
<dbReference type="RefSeq" id="WP_010907768.1">
    <property type="nucleotide sequence ID" value="NC_002677.1"/>
</dbReference>
<dbReference type="SMR" id="Q9CCS3"/>
<dbReference type="STRING" id="272631.gene:17574340"/>
<dbReference type="KEGG" id="mle:ML0519"/>
<dbReference type="PATRIC" id="fig|272631.5.peg.908"/>
<dbReference type="Leproma" id="ML0519"/>
<dbReference type="eggNOG" id="COG0757">
    <property type="taxonomic scope" value="Bacteria"/>
</dbReference>
<dbReference type="HOGENOM" id="CLU_090968_2_1_11"/>
<dbReference type="OrthoDB" id="9790793at2"/>
<dbReference type="UniPathway" id="UPA00053">
    <property type="reaction ID" value="UER00086"/>
</dbReference>
<dbReference type="Proteomes" id="UP000000806">
    <property type="component" value="Chromosome"/>
</dbReference>
<dbReference type="GO" id="GO:0003855">
    <property type="term" value="F:3-dehydroquinate dehydratase activity"/>
    <property type="evidence" value="ECO:0007669"/>
    <property type="project" value="UniProtKB-UniRule"/>
</dbReference>
<dbReference type="GO" id="GO:0008652">
    <property type="term" value="P:amino acid biosynthetic process"/>
    <property type="evidence" value="ECO:0007669"/>
    <property type="project" value="UniProtKB-KW"/>
</dbReference>
<dbReference type="GO" id="GO:0009073">
    <property type="term" value="P:aromatic amino acid family biosynthetic process"/>
    <property type="evidence" value="ECO:0007669"/>
    <property type="project" value="UniProtKB-KW"/>
</dbReference>
<dbReference type="GO" id="GO:0009423">
    <property type="term" value="P:chorismate biosynthetic process"/>
    <property type="evidence" value="ECO:0007669"/>
    <property type="project" value="UniProtKB-UniRule"/>
</dbReference>
<dbReference type="GO" id="GO:0019631">
    <property type="term" value="P:quinate catabolic process"/>
    <property type="evidence" value="ECO:0007669"/>
    <property type="project" value="TreeGrafter"/>
</dbReference>
<dbReference type="CDD" id="cd00466">
    <property type="entry name" value="DHQase_II"/>
    <property type="match status" value="1"/>
</dbReference>
<dbReference type="FunFam" id="3.40.50.9100:FF:000001">
    <property type="entry name" value="3-dehydroquinate dehydratase"/>
    <property type="match status" value="1"/>
</dbReference>
<dbReference type="Gene3D" id="3.40.50.9100">
    <property type="entry name" value="Dehydroquinase, class II"/>
    <property type="match status" value="1"/>
</dbReference>
<dbReference type="HAMAP" id="MF_00169">
    <property type="entry name" value="AroQ"/>
    <property type="match status" value="1"/>
</dbReference>
<dbReference type="InterPro" id="IPR001874">
    <property type="entry name" value="DHquinase_II"/>
</dbReference>
<dbReference type="InterPro" id="IPR018509">
    <property type="entry name" value="DHquinase_II_CS"/>
</dbReference>
<dbReference type="InterPro" id="IPR036441">
    <property type="entry name" value="DHquinase_II_sf"/>
</dbReference>
<dbReference type="NCBIfam" id="TIGR01088">
    <property type="entry name" value="aroQ"/>
    <property type="match status" value="1"/>
</dbReference>
<dbReference type="NCBIfam" id="NF003805">
    <property type="entry name" value="PRK05395.1-2"/>
    <property type="match status" value="1"/>
</dbReference>
<dbReference type="NCBIfam" id="NF003806">
    <property type="entry name" value="PRK05395.1-3"/>
    <property type="match status" value="1"/>
</dbReference>
<dbReference type="NCBIfam" id="NF003807">
    <property type="entry name" value="PRK05395.1-4"/>
    <property type="match status" value="1"/>
</dbReference>
<dbReference type="PANTHER" id="PTHR21272">
    <property type="entry name" value="CATABOLIC 3-DEHYDROQUINASE"/>
    <property type="match status" value="1"/>
</dbReference>
<dbReference type="PANTHER" id="PTHR21272:SF3">
    <property type="entry name" value="CATABOLIC 3-DEHYDROQUINASE"/>
    <property type="match status" value="1"/>
</dbReference>
<dbReference type="Pfam" id="PF01220">
    <property type="entry name" value="DHquinase_II"/>
    <property type="match status" value="1"/>
</dbReference>
<dbReference type="PIRSF" id="PIRSF001399">
    <property type="entry name" value="DHquinase_II"/>
    <property type="match status" value="1"/>
</dbReference>
<dbReference type="SUPFAM" id="SSF52304">
    <property type="entry name" value="Type II 3-dehydroquinate dehydratase"/>
    <property type="match status" value="1"/>
</dbReference>
<dbReference type="PROSITE" id="PS01029">
    <property type="entry name" value="DEHYDROQUINASE_II"/>
    <property type="match status" value="1"/>
</dbReference>
<accession>Q9CCS3</accession>
<protein>
    <recommendedName>
        <fullName>3-dehydroquinate dehydratase</fullName>
        <shortName>3-dehydroquinase</shortName>
        <ecNumber>4.2.1.10</ecNumber>
    </recommendedName>
    <alternativeName>
        <fullName>Type II DHQase</fullName>
    </alternativeName>
</protein>
<keyword id="KW-0028">Amino-acid biosynthesis</keyword>
<keyword id="KW-0057">Aromatic amino acid biosynthesis</keyword>
<keyword id="KW-0456">Lyase</keyword>
<keyword id="KW-1185">Reference proteome</keyword>
<feature type="chain" id="PRO_0000159908" description="3-dehydroquinate dehydratase">
    <location>
        <begin position="1"/>
        <end position="145"/>
    </location>
</feature>
<feature type="active site" description="Proton acceptor" evidence="1">
    <location>
        <position position="23"/>
    </location>
</feature>
<feature type="active site" description="Proton donor" evidence="1">
    <location>
        <position position="100"/>
    </location>
</feature>
<feature type="binding site" evidence="1">
    <location>
        <position position="74"/>
    </location>
    <ligand>
        <name>substrate</name>
    </ligand>
</feature>
<feature type="binding site" evidence="1">
    <location>
        <position position="80"/>
    </location>
    <ligand>
        <name>substrate</name>
    </ligand>
</feature>
<feature type="binding site" evidence="1">
    <location>
        <position position="87"/>
    </location>
    <ligand>
        <name>substrate</name>
    </ligand>
</feature>
<feature type="binding site" evidence="1">
    <location>
        <begin position="101"/>
        <end position="102"/>
    </location>
    <ligand>
        <name>substrate</name>
    </ligand>
</feature>
<feature type="binding site" evidence="1">
    <location>
        <position position="111"/>
    </location>
    <ligand>
        <name>substrate</name>
    </ligand>
</feature>
<feature type="site" description="Transition state stabilizer" evidence="1">
    <location>
        <position position="18"/>
    </location>
</feature>
<proteinExistence type="inferred from homology"/>
<sequence>MTMVNIINGPNLGRLGRREPDVYGSTTHEQLSALIERAAVEFGIKAVVRQSDSESQLLDWIHLAADAGEPVILNAGGLTHTSVALRDACAELSAPFIEVHISNVHAREEFRRHSYLSPLATGVITGLGVQGYLLALRYLAEIAGN</sequence>
<name>AROQ_MYCLE</name>
<evidence type="ECO:0000250" key="1"/>
<evidence type="ECO:0000305" key="2"/>
<organism>
    <name type="scientific">Mycobacterium leprae (strain TN)</name>
    <dbReference type="NCBI Taxonomy" id="272631"/>
    <lineage>
        <taxon>Bacteria</taxon>
        <taxon>Bacillati</taxon>
        <taxon>Actinomycetota</taxon>
        <taxon>Actinomycetes</taxon>
        <taxon>Mycobacteriales</taxon>
        <taxon>Mycobacteriaceae</taxon>
        <taxon>Mycobacterium</taxon>
    </lineage>
</organism>
<gene>
    <name type="primary">aroQ</name>
    <name type="synonym">aroD</name>
    <name type="ordered locus">ML0519</name>
</gene>
<reference key="1">
    <citation type="journal article" date="2001" name="Nature">
        <title>Massive gene decay in the leprosy bacillus.</title>
        <authorList>
            <person name="Cole S.T."/>
            <person name="Eiglmeier K."/>
            <person name="Parkhill J."/>
            <person name="James K.D."/>
            <person name="Thomson N.R."/>
            <person name="Wheeler P.R."/>
            <person name="Honore N."/>
            <person name="Garnier T."/>
            <person name="Churcher C.M."/>
            <person name="Harris D.E."/>
            <person name="Mungall K.L."/>
            <person name="Basham D."/>
            <person name="Brown D."/>
            <person name="Chillingworth T."/>
            <person name="Connor R."/>
            <person name="Davies R.M."/>
            <person name="Devlin K."/>
            <person name="Duthoy S."/>
            <person name="Feltwell T."/>
            <person name="Fraser A."/>
            <person name="Hamlin N."/>
            <person name="Holroyd S."/>
            <person name="Hornsby T."/>
            <person name="Jagels K."/>
            <person name="Lacroix C."/>
            <person name="Maclean J."/>
            <person name="Moule S."/>
            <person name="Murphy L.D."/>
            <person name="Oliver K."/>
            <person name="Quail M.A."/>
            <person name="Rajandream M.A."/>
            <person name="Rutherford K.M."/>
            <person name="Rutter S."/>
            <person name="Seeger K."/>
            <person name="Simon S."/>
            <person name="Simmonds M."/>
            <person name="Skelton J."/>
            <person name="Squares R."/>
            <person name="Squares S."/>
            <person name="Stevens K."/>
            <person name="Taylor K."/>
            <person name="Whitehead S."/>
            <person name="Woodward J.R."/>
            <person name="Barrell B.G."/>
        </authorList>
    </citation>
    <scope>NUCLEOTIDE SEQUENCE [LARGE SCALE GENOMIC DNA]</scope>
    <source>
        <strain>TN</strain>
    </source>
</reference>